<evidence type="ECO:0000255" key="1"/>
<evidence type="ECO:0000305" key="2"/>
<protein>
    <recommendedName>
        <fullName>Uncharacterized transporter BUsg_567</fullName>
    </recommendedName>
</protein>
<reference key="1">
    <citation type="journal article" date="2002" name="Science">
        <title>50 million years of genomic stasis in endosymbiotic bacteria.</title>
        <authorList>
            <person name="Tamas I."/>
            <person name="Klasson L."/>
            <person name="Canbaeck B."/>
            <person name="Naeslund A.K."/>
            <person name="Eriksson A.-S."/>
            <person name="Wernegreen J.J."/>
            <person name="Sandstroem J.P."/>
            <person name="Moran N.A."/>
            <person name="Andersson S.G.E."/>
        </authorList>
    </citation>
    <scope>NUCLEOTIDE SEQUENCE [LARGE SCALE GENOMIC DNA]</scope>
    <source>
        <strain>Sg</strain>
    </source>
</reference>
<name>Y567_BUCAP</name>
<dbReference type="EMBL" id="AE013218">
    <property type="protein sequence ID" value="AAM68103.1"/>
    <property type="molecule type" value="Genomic_DNA"/>
</dbReference>
<dbReference type="RefSeq" id="WP_011054069.1">
    <property type="nucleotide sequence ID" value="NC_004061.1"/>
</dbReference>
<dbReference type="SMR" id="Q8K902"/>
<dbReference type="STRING" id="198804.BUsg_567"/>
<dbReference type="GeneID" id="93004045"/>
<dbReference type="KEGG" id="bas:BUsg_567"/>
<dbReference type="eggNOG" id="COG2814">
    <property type="taxonomic scope" value="Bacteria"/>
</dbReference>
<dbReference type="HOGENOM" id="CLU_001265_19_3_6"/>
<dbReference type="Proteomes" id="UP000000416">
    <property type="component" value="Chromosome"/>
</dbReference>
<dbReference type="GO" id="GO:0005886">
    <property type="term" value="C:plasma membrane"/>
    <property type="evidence" value="ECO:0007669"/>
    <property type="project" value="UniProtKB-SubCell"/>
</dbReference>
<dbReference type="GO" id="GO:0022857">
    <property type="term" value="F:transmembrane transporter activity"/>
    <property type="evidence" value="ECO:0007669"/>
    <property type="project" value="InterPro"/>
</dbReference>
<dbReference type="CDD" id="cd17324">
    <property type="entry name" value="MFS_NepI_like"/>
    <property type="match status" value="1"/>
</dbReference>
<dbReference type="Gene3D" id="1.20.1250.20">
    <property type="entry name" value="MFS general substrate transporter like domains"/>
    <property type="match status" value="1"/>
</dbReference>
<dbReference type="InterPro" id="IPR011701">
    <property type="entry name" value="MFS"/>
</dbReference>
<dbReference type="InterPro" id="IPR020846">
    <property type="entry name" value="MFS_dom"/>
</dbReference>
<dbReference type="InterPro" id="IPR036259">
    <property type="entry name" value="MFS_trans_sf"/>
</dbReference>
<dbReference type="InterPro" id="IPR005829">
    <property type="entry name" value="Sugar_transporter_CS"/>
</dbReference>
<dbReference type="PANTHER" id="PTHR43271">
    <property type="entry name" value="BLL2771 PROTEIN"/>
    <property type="match status" value="1"/>
</dbReference>
<dbReference type="PANTHER" id="PTHR43271:SF1">
    <property type="entry name" value="INNER MEMBRANE TRANSPORT PROTEIN YNFM"/>
    <property type="match status" value="1"/>
</dbReference>
<dbReference type="Pfam" id="PF07690">
    <property type="entry name" value="MFS_1"/>
    <property type="match status" value="1"/>
</dbReference>
<dbReference type="SUPFAM" id="SSF103473">
    <property type="entry name" value="MFS general substrate transporter"/>
    <property type="match status" value="1"/>
</dbReference>
<dbReference type="PROSITE" id="PS50850">
    <property type="entry name" value="MFS"/>
    <property type="match status" value="1"/>
</dbReference>
<dbReference type="PROSITE" id="PS00216">
    <property type="entry name" value="SUGAR_TRANSPORT_1"/>
    <property type="match status" value="1"/>
</dbReference>
<comment type="subcellular location">
    <subcellularLocation>
        <location evidence="2">Cell membrane</location>
        <topology evidence="2">Multi-pass membrane protein</topology>
    </subcellularLocation>
</comment>
<comment type="similarity">
    <text evidence="2">Belongs to the major facilitator superfamily.</text>
</comment>
<gene>
    <name type="ordered locus">BUsg_567</name>
</gene>
<keyword id="KW-1003">Cell membrane</keyword>
<keyword id="KW-0472">Membrane</keyword>
<keyword id="KW-0812">Transmembrane</keyword>
<keyword id="KW-1133">Transmembrane helix</keyword>
<keyword id="KW-0813">Transport</keyword>
<proteinExistence type="inferred from homology"/>
<organism>
    <name type="scientific">Buchnera aphidicola subsp. Schizaphis graminum (strain Sg)</name>
    <dbReference type="NCBI Taxonomy" id="198804"/>
    <lineage>
        <taxon>Bacteria</taxon>
        <taxon>Pseudomonadati</taxon>
        <taxon>Pseudomonadota</taxon>
        <taxon>Gammaproteobacteria</taxon>
        <taxon>Enterobacterales</taxon>
        <taxon>Erwiniaceae</taxon>
        <taxon>Buchnera</taxon>
    </lineage>
</organism>
<sequence length="413" mass="46362">MDIYTYKKHILFKKCFLYFWKIKNVIKKKNTKKFNQIVLSLFLGGFSSFSILYCVQSILPVFSKQFCLTATESSLSLSAATATMSIGTLFIGPLSDRIGRKSIMSSSLLIAAVLTIICSISNNWTVIVFLRALTGLALSGVVAVAMTYIVEEVHPNSVSFCMGLYISGNTIGGCSGRILSSILAEYFSWHIAFIVIGFFSLMSSCLFLYFLPSSKNFYPISIDFNKFLKNFYLHLKNPTLLILFAIGFMLMGSFITIFNYISYRLMLSPFFLSSSNIGFLSIIYLTGVYSSPKAGILINQYNRSSILRIALLLMILGLLMTQYNEIFIIILGLVIFSSGFFASHSIASSWIGFHAKIAKVQATSLYLFFYYLGSSIFGTFGGFFWFYLKWIGISSFIIIILIFAILLSLKLKK</sequence>
<accession>Q8K902</accession>
<feature type="chain" id="PRO_0000173416" description="Uncharacterized transporter BUsg_567">
    <location>
        <begin position="1"/>
        <end position="413"/>
    </location>
</feature>
<feature type="transmembrane region" description="Helical" evidence="1">
    <location>
        <begin position="42"/>
        <end position="62"/>
    </location>
</feature>
<feature type="transmembrane region" description="Helical" evidence="1">
    <location>
        <begin position="75"/>
        <end position="95"/>
    </location>
</feature>
<feature type="transmembrane region" description="Helical" evidence="1">
    <location>
        <begin position="109"/>
        <end position="129"/>
    </location>
</feature>
<feature type="transmembrane region" description="Helical" evidence="1">
    <location>
        <begin position="133"/>
        <end position="153"/>
    </location>
</feature>
<feature type="transmembrane region" description="Helical" evidence="1">
    <location>
        <begin position="157"/>
        <end position="179"/>
    </location>
</feature>
<feature type="transmembrane region" description="Helical" evidence="1">
    <location>
        <begin position="191"/>
        <end position="211"/>
    </location>
</feature>
<feature type="transmembrane region" description="Helical" evidence="1">
    <location>
        <begin position="238"/>
        <end position="258"/>
    </location>
</feature>
<feature type="transmembrane region" description="Helical" evidence="1">
    <location>
        <begin position="265"/>
        <end position="285"/>
    </location>
</feature>
<feature type="transmembrane region" description="Helical" evidence="1">
    <location>
        <begin position="304"/>
        <end position="324"/>
    </location>
</feature>
<feature type="transmembrane region" description="Helical" evidence="1">
    <location>
        <begin position="326"/>
        <end position="346"/>
    </location>
</feature>
<feature type="transmembrane region" description="Helical" evidence="1">
    <location>
        <begin position="362"/>
        <end position="382"/>
    </location>
</feature>
<feature type="transmembrane region" description="Helical" evidence="1">
    <location>
        <begin position="383"/>
        <end position="403"/>
    </location>
</feature>